<gene>
    <name type="primary">ADCY10</name>
    <name type="synonym">SAC</name>
</gene>
<accession>Q96PN6</accession>
<accession>B4DZF0</accession>
<accession>F5GWS5</accession>
<accession>O95558</accession>
<accession>Q5R329</accession>
<accession>Q5R330</accession>
<accession>Q8WXV4</accession>
<accession>Q9NNX0</accession>
<proteinExistence type="evidence at protein level"/>
<comment type="function">
    <text evidence="1 7 8 9 10 11">Catalyzes the formation of the signaling molecule cAMP (PubMed:12609998, PubMed:15659711, PubMed:24567411, PubMed:24616449, PubMed:25040695). May function as sensor that mediates responses to changes in cellular bicarbonate and CO(2) levels (PubMed:15659711, PubMed:17591988). Has a critical role in mammalian spermatogenesis by producing the cAMP which regulates cAMP-responsive nuclear factors indispensable for sperm maturation in the epididymis. Induces capacitation, the maturational process that sperm undergo prior to fertilization (By similarity). Involved in ciliary beat regulation (PubMed:17591988).</text>
</comment>
<comment type="catalytic activity">
    <reaction evidence="6 7 9 10 11">
        <text>ATP = 3',5'-cyclic AMP + diphosphate</text>
        <dbReference type="Rhea" id="RHEA:15389"/>
        <dbReference type="ChEBI" id="CHEBI:30616"/>
        <dbReference type="ChEBI" id="CHEBI:33019"/>
        <dbReference type="ChEBI" id="CHEBI:58165"/>
        <dbReference type="EC" id="4.6.1.1"/>
    </reaction>
</comment>
<comment type="cofactor">
    <cofactor evidence="6 7 9 11 20">
        <name>Mg(2+)</name>
        <dbReference type="ChEBI" id="CHEBI:18420"/>
    </cofactor>
    <cofactor evidence="6 7 10">
        <name>Mn(2+)</name>
        <dbReference type="ChEBI" id="CHEBI:29035"/>
    </cofactor>
    <text evidence="6 7 10 21">Binds 2 magnesium ions per subunit (PubMed:25040695). Is also active with manganese (in vitro) (PubMed:12609998, PubMed:15659711, PubMed:24616449).</text>
</comment>
<comment type="activity regulation">
    <text evidence="6 7 9 10 11">Activated by manganese or magnesium ions (PubMed:12609998, PubMed:24616449). In the presence of magnesium ions, the enzyme is activated by bicarbonate (PubMed:12609998, PubMed:15659711, PubMed:24567411). In the presence of manganese ions, the enzyme is inhibited by bicarbonate (PubMed:15659711). In the absence of magnesium and bicarbonate, the enzyme is weakly activated by calcium (PubMed:15659711). Calcium mildly increases the enzyme activity, also in the presence of magnesium ions (PubMed:15659711, PubMed:25040695).</text>
</comment>
<comment type="biophysicochemical properties">
    <kinetics>
        <KM evidence="6">0.8 mM for ATP-Mn(2+)</KM>
        <KM evidence="6">2.41 mM for Mg(2+)</KM>
    </kinetics>
</comment>
<comment type="subcellular location">
    <subcellularLocation>
        <location evidence="7">Cell membrane</location>
        <topology evidence="7">Peripheral membrane protein</topology>
        <orientation evidence="7">Cytoplasmic side</orientation>
    </subcellularLocation>
    <subcellularLocation>
        <location evidence="5 7">Cytoplasm</location>
        <location evidence="5 7">Cytoskeleton</location>
    </subcellularLocation>
    <subcellularLocation>
        <location evidence="5 7">Cytoplasm</location>
        <location evidence="5 7">Perinuclear region</location>
    </subcellularLocation>
    <subcellularLocation>
        <location evidence="5 7">Nucleus</location>
    </subcellularLocation>
    <subcellularLocation>
        <location evidence="8">Cell projection</location>
        <location evidence="8">Cilium</location>
    </subcellularLocation>
    <subcellularLocation>
        <location evidence="5">Cytoplasm</location>
    </subcellularLocation>
    <subcellularLocation>
        <location evidence="5">Mitochondrion</location>
    </subcellularLocation>
    <text evidence="5 7">Distributed to subcellular compartments containing cAMP targets. Found as a plasma membrane-associated protein, protein concentrated in the perinuclear region and protein colocalized with actin or tubulin.</text>
</comment>
<comment type="alternative products">
    <event type="alternative splicing"/>
    <isoform>
        <id>Q96PN6-1</id>
        <name>1</name>
        <sequence type="displayed"/>
    </isoform>
    <isoform>
        <id>Q96PN6-2</id>
        <name>2</name>
        <sequence type="described" ref="VSP_030867"/>
    </isoform>
    <isoform>
        <id>Q96PN6-3</id>
        <name>3</name>
        <sequence type="described" ref="VSP_030866 VSP_030868 VSP_030869 VSP_030870"/>
    </isoform>
    <isoform>
        <id>Q96PN6-4</id>
        <name>4</name>
        <sequence type="described" ref="VSP_046329"/>
    </isoform>
</comment>
<comment type="tissue specificity">
    <text evidence="4 7 8">Detected in airway epithelial cells and testis (at protein level) (PubMed:17591988). Weakly expressed in multiple tissues. Expressed in brain, heart, kidney, liver, lung, pancreas, peripheral blood leukocytes, placenta, skeletal muscle, stomach, thymus, airway epithelial cells, duodenum, jejunum and ileum. Very low level of expression in bone.</text>
</comment>
<comment type="domain">
    <text evidence="9 10 11">The N-terminal guanylate cyclase domains are required for enzyme activity. Fragments or isoforms containing the first 470 amino acid residues are fully active.</text>
</comment>
<comment type="PTM">
    <text evidence="18">Cleavage may occur to generate the active 48 kDa form.</text>
</comment>
<comment type="disease" evidence="4">
    <disease id="DI-02646">
        <name>Hypercalciuria absorptive 2</name>
        <acronym>HCA2</acronym>
        <description>A common type of hypercalciuria, a condition characterized by excessive urinary calcium excretion. Absorptive hypercalciuria is due to gastrointestinal hyperabsorption of calcium and is a frequent cause of calcium oxalate nephrolithiasis.</description>
        <dbReference type="MIM" id="143870"/>
    </disease>
    <text>Disease susceptibility is associated with variants affecting the gene represented in this entry.</text>
</comment>
<comment type="similarity">
    <text evidence="2">Belongs to the adenylyl cyclase class-4/guanylyl cyclase family.</text>
</comment>
<evidence type="ECO:0000250" key="1">
    <source>
        <dbReference type="UniProtKB" id="Q8C0T9"/>
    </source>
</evidence>
<evidence type="ECO:0000255" key="2">
    <source>
        <dbReference type="PROSITE-ProRule" id="PRU00099"/>
    </source>
</evidence>
<evidence type="ECO:0000269" key="3">
    <source>
    </source>
</evidence>
<evidence type="ECO:0000269" key="4">
    <source>
    </source>
</evidence>
<evidence type="ECO:0000269" key="5">
    <source>
    </source>
</evidence>
<evidence type="ECO:0000269" key="6">
    <source>
    </source>
</evidence>
<evidence type="ECO:0000269" key="7">
    <source>
    </source>
</evidence>
<evidence type="ECO:0000269" key="8">
    <source>
    </source>
</evidence>
<evidence type="ECO:0000269" key="9">
    <source>
    </source>
</evidence>
<evidence type="ECO:0000269" key="10">
    <source>
    </source>
</evidence>
<evidence type="ECO:0000269" key="11">
    <source>
    </source>
</evidence>
<evidence type="ECO:0000303" key="12">
    <source>
    </source>
</evidence>
<evidence type="ECO:0000303" key="13">
    <source>
    </source>
</evidence>
<evidence type="ECO:0000303" key="14">
    <source>
    </source>
</evidence>
<evidence type="ECO:0000303" key="15">
    <source>
    </source>
</evidence>
<evidence type="ECO:0000303" key="16">
    <source>
    </source>
</evidence>
<evidence type="ECO:0000303" key="17">
    <source ref="5"/>
</evidence>
<evidence type="ECO:0000305" key="18"/>
<evidence type="ECO:0000305" key="19">
    <source>
    </source>
</evidence>
<evidence type="ECO:0000305" key="20">
    <source>
    </source>
</evidence>
<evidence type="ECO:0000305" key="21">
    <source>
    </source>
</evidence>
<evidence type="ECO:0007744" key="22">
    <source>
        <dbReference type="PDB" id="4CLF"/>
    </source>
</evidence>
<evidence type="ECO:0007744" key="23">
    <source>
        <dbReference type="PDB" id="4CLK"/>
    </source>
</evidence>
<evidence type="ECO:0007744" key="24">
    <source>
        <dbReference type="PDB" id="4CLL"/>
    </source>
</evidence>
<evidence type="ECO:0007744" key="25">
    <source>
        <dbReference type="PDB" id="4OYA"/>
    </source>
</evidence>
<evidence type="ECO:0007744" key="26">
    <source>
        <dbReference type="PDB" id="4OYB"/>
    </source>
</evidence>
<evidence type="ECO:0007744" key="27">
    <source>
        <dbReference type="PDB" id="4OYI"/>
    </source>
</evidence>
<evidence type="ECO:0007744" key="28">
    <source>
        <dbReference type="PDB" id="4OYZ"/>
    </source>
</evidence>
<evidence type="ECO:0007744" key="29">
    <source>
        <dbReference type="PDB" id="4UST"/>
    </source>
</evidence>
<evidence type="ECO:0007744" key="30">
    <source>
        <dbReference type="PDB" id="4USU"/>
    </source>
</evidence>
<evidence type="ECO:0007744" key="31">
    <source>
        <dbReference type="PDB" id="4USV"/>
    </source>
</evidence>
<evidence type="ECO:0007744" key="32">
    <source>
        <dbReference type="PDB" id="4USW"/>
    </source>
</evidence>
<evidence type="ECO:0007829" key="33">
    <source>
        <dbReference type="PDB" id="4CLF"/>
    </source>
</evidence>
<evidence type="ECO:0007829" key="34">
    <source>
        <dbReference type="PDB" id="4OYB"/>
    </source>
</evidence>
<evidence type="ECO:0007829" key="35">
    <source>
        <dbReference type="PDB" id="4OYW"/>
    </source>
</evidence>
<evidence type="ECO:0007829" key="36">
    <source>
        <dbReference type="PDB" id="4OYZ"/>
    </source>
</evidence>
<dbReference type="EC" id="4.6.1.1" evidence="6 7 9 10 11"/>
<dbReference type="EMBL" id="AF271058">
    <property type="protein sequence ID" value="AAF74296.1"/>
    <property type="molecule type" value="mRNA"/>
</dbReference>
<dbReference type="EMBL" id="AF331033">
    <property type="protein sequence ID" value="AAL57036.1"/>
    <property type="molecule type" value="mRNA"/>
</dbReference>
<dbReference type="EMBL" id="AF176813">
    <property type="protein sequence ID" value="AAF65931.1"/>
    <property type="molecule type" value="mRNA"/>
</dbReference>
<dbReference type="EMBL" id="AF299350">
    <property type="protein sequence ID" value="AAK96045.1"/>
    <property type="molecule type" value="mRNA"/>
</dbReference>
<dbReference type="EMBL" id="AL035122">
    <property type="protein sequence ID" value="CAA22684.1"/>
    <property type="molecule type" value="mRNA"/>
</dbReference>
<dbReference type="EMBL" id="AK302884">
    <property type="protein sequence ID" value="BAG64062.1"/>
    <property type="molecule type" value="mRNA"/>
</dbReference>
<dbReference type="EMBL" id="Z97876">
    <property type="status" value="NOT_ANNOTATED_CDS"/>
    <property type="molecule type" value="Genomic_DNA"/>
</dbReference>
<dbReference type="EMBL" id="Z99943">
    <property type="status" value="NOT_ANNOTATED_CDS"/>
    <property type="molecule type" value="Genomic_DNA"/>
</dbReference>
<dbReference type="EMBL" id="CH471067">
    <property type="protein sequence ID" value="EAW90804.1"/>
    <property type="molecule type" value="Genomic_DNA"/>
</dbReference>
<dbReference type="EMBL" id="CH471067">
    <property type="protein sequence ID" value="EAW90807.1"/>
    <property type="molecule type" value="Genomic_DNA"/>
</dbReference>
<dbReference type="EMBL" id="BC117366">
    <property type="protein sequence ID" value="AAI17367.1"/>
    <property type="molecule type" value="mRNA"/>
</dbReference>
<dbReference type="EMBL" id="BC117372">
    <property type="protein sequence ID" value="AAI17373.1"/>
    <property type="molecule type" value="mRNA"/>
</dbReference>
<dbReference type="CCDS" id="CCDS1265.1">
    <molecule id="Q96PN6-1"/>
</dbReference>
<dbReference type="CCDS" id="CCDS53426.1">
    <molecule id="Q96PN6-4"/>
</dbReference>
<dbReference type="CCDS" id="CCDS72977.1">
    <molecule id="Q96PN6-2"/>
</dbReference>
<dbReference type="RefSeq" id="NP_001161221.1">
    <molecule id="Q96PN6-4"/>
    <property type="nucleotide sequence ID" value="NM_001167749.3"/>
</dbReference>
<dbReference type="RefSeq" id="NP_001284701.1">
    <molecule id="Q96PN6-2"/>
    <property type="nucleotide sequence ID" value="NM_001297772.2"/>
</dbReference>
<dbReference type="RefSeq" id="NP_060887.2">
    <molecule id="Q96PN6-1"/>
    <property type="nucleotide sequence ID" value="NM_018417.6"/>
</dbReference>
<dbReference type="RefSeq" id="XP_011508062.1">
    <molecule id="Q96PN6-1"/>
    <property type="nucleotide sequence ID" value="XM_011509760.4"/>
</dbReference>
<dbReference type="PDB" id="4CLF">
    <property type="method" value="X-ray"/>
    <property type="resolution" value="1.70 A"/>
    <property type="chains" value="A=1-469"/>
</dbReference>
<dbReference type="PDB" id="4CLK">
    <property type="method" value="X-ray"/>
    <property type="resolution" value="2.20 A"/>
    <property type="chains" value="A=1-469"/>
</dbReference>
<dbReference type="PDB" id="4CLL">
    <property type="method" value="X-ray"/>
    <property type="resolution" value="1.70 A"/>
    <property type="chains" value="A=1-469"/>
</dbReference>
<dbReference type="PDB" id="4CLP">
    <property type="method" value="X-ray"/>
    <property type="resolution" value="1.90 A"/>
    <property type="chains" value="A=1-469"/>
</dbReference>
<dbReference type="PDB" id="4CLS">
    <property type="method" value="X-ray"/>
    <property type="resolution" value="1.85 A"/>
    <property type="chains" value="A=1-469"/>
</dbReference>
<dbReference type="PDB" id="4CLT">
    <property type="method" value="X-ray"/>
    <property type="resolution" value="1.95 A"/>
    <property type="chains" value="A=1-469"/>
</dbReference>
<dbReference type="PDB" id="4CLU">
    <property type="method" value="X-ray"/>
    <property type="resolution" value="1.90 A"/>
    <property type="chains" value="A=1-469"/>
</dbReference>
<dbReference type="PDB" id="4CLW">
    <property type="method" value="X-ray"/>
    <property type="resolution" value="2.15 A"/>
    <property type="chains" value="A=1-469"/>
</dbReference>
<dbReference type="PDB" id="4CLY">
    <property type="method" value="X-ray"/>
    <property type="resolution" value="2.05 A"/>
    <property type="chains" value="A=1-469"/>
</dbReference>
<dbReference type="PDB" id="4CLZ">
    <property type="method" value="X-ray"/>
    <property type="resolution" value="1.90 A"/>
    <property type="chains" value="A=1-469"/>
</dbReference>
<dbReference type="PDB" id="4CM0">
    <property type="method" value="X-ray"/>
    <property type="resolution" value="3.20 A"/>
    <property type="chains" value="A=1-469"/>
</dbReference>
<dbReference type="PDB" id="4CM2">
    <property type="method" value="X-ray"/>
    <property type="resolution" value="1.80 A"/>
    <property type="chains" value="A=1-469"/>
</dbReference>
<dbReference type="PDB" id="4OYA">
    <property type="method" value="X-ray"/>
    <property type="resolution" value="2.03 A"/>
    <property type="chains" value="A=1-469"/>
</dbReference>
<dbReference type="PDB" id="4OYB">
    <property type="method" value="X-ray"/>
    <property type="resolution" value="1.70 A"/>
    <property type="chains" value="A=1-469"/>
</dbReference>
<dbReference type="PDB" id="4OYI">
    <property type="method" value="X-ray"/>
    <property type="resolution" value="1.70 A"/>
    <property type="chains" value="A=1-469"/>
</dbReference>
<dbReference type="PDB" id="4OYM">
    <property type="method" value="X-ray"/>
    <property type="resolution" value="1.70 A"/>
    <property type="chains" value="A=1-469"/>
</dbReference>
<dbReference type="PDB" id="4OYO">
    <property type="method" value="X-ray"/>
    <property type="resolution" value="1.75 A"/>
    <property type="chains" value="A=1-469"/>
</dbReference>
<dbReference type="PDB" id="4OYP">
    <property type="method" value="X-ray"/>
    <property type="resolution" value="2.28 A"/>
    <property type="chains" value="A=1-469"/>
</dbReference>
<dbReference type="PDB" id="4OYW">
    <property type="method" value="X-ray"/>
    <property type="resolution" value="1.70 A"/>
    <property type="chains" value="A=1-469"/>
</dbReference>
<dbReference type="PDB" id="4OYX">
    <property type="method" value="X-ray"/>
    <property type="resolution" value="1.89 A"/>
    <property type="chains" value="A=1-469"/>
</dbReference>
<dbReference type="PDB" id="4OYZ">
    <property type="method" value="X-ray"/>
    <property type="resolution" value="1.74 A"/>
    <property type="chains" value="A=1-469"/>
</dbReference>
<dbReference type="PDB" id="4OZ2">
    <property type="method" value="X-ray"/>
    <property type="resolution" value="2.10 A"/>
    <property type="chains" value="A=1-469"/>
</dbReference>
<dbReference type="PDB" id="4OZ3">
    <property type="method" value="X-ray"/>
    <property type="resolution" value="1.70 A"/>
    <property type="chains" value="A=1-469"/>
</dbReference>
<dbReference type="PDB" id="4UST">
    <property type="method" value="X-ray"/>
    <property type="resolution" value="1.90 A"/>
    <property type="chains" value="A=1-469"/>
</dbReference>
<dbReference type="PDB" id="4USU">
    <property type="method" value="X-ray"/>
    <property type="resolution" value="1.95 A"/>
    <property type="chains" value="A=1-469"/>
</dbReference>
<dbReference type="PDB" id="4USV">
    <property type="method" value="X-ray"/>
    <property type="resolution" value="2.00 A"/>
    <property type="chains" value="A=1-469"/>
</dbReference>
<dbReference type="PDB" id="4USW">
    <property type="method" value="X-ray"/>
    <property type="resolution" value="2.05 A"/>
    <property type="chains" value="A=1-469"/>
</dbReference>
<dbReference type="PDB" id="5D0R">
    <property type="method" value="X-ray"/>
    <property type="resolution" value="2.24 A"/>
    <property type="chains" value="A=1-469"/>
</dbReference>
<dbReference type="PDB" id="5IV3">
    <property type="method" value="X-ray"/>
    <property type="resolution" value="1.86 A"/>
    <property type="chains" value="A=1-469"/>
</dbReference>
<dbReference type="PDB" id="5IV4">
    <property type="method" value="X-ray"/>
    <property type="resolution" value="1.79 A"/>
    <property type="chains" value="A=1-469"/>
</dbReference>
<dbReference type="PDB" id="7OVD">
    <property type="method" value="X-ray"/>
    <property type="resolution" value="2.20 A"/>
    <property type="chains" value="A=1-469"/>
</dbReference>
<dbReference type="PDB" id="8B75">
    <property type="method" value="X-ray"/>
    <property type="resolution" value="1.82 A"/>
    <property type="chains" value="A=1-469"/>
</dbReference>
<dbReference type="PDB" id="8CNH">
    <property type="method" value="X-ray"/>
    <property type="resolution" value="2.00 A"/>
    <property type="chains" value="A=1-469"/>
</dbReference>
<dbReference type="PDB" id="8CO7">
    <property type="method" value="X-ray"/>
    <property type="resolution" value="1.90 A"/>
    <property type="chains" value="A=1-469"/>
</dbReference>
<dbReference type="PDB" id="8COJ">
    <property type="method" value="X-ray"/>
    <property type="resolution" value="2.10 A"/>
    <property type="chains" value="A=1-469"/>
</dbReference>
<dbReference type="PDB" id="8COT">
    <property type="method" value="X-ray"/>
    <property type="resolution" value="2.10 A"/>
    <property type="chains" value="A=1-469"/>
</dbReference>
<dbReference type="PDB" id="8IL7">
    <property type="method" value="X-ray"/>
    <property type="resolution" value="1.95 A"/>
    <property type="chains" value="A=1-469"/>
</dbReference>
<dbReference type="PDBsum" id="4CLF"/>
<dbReference type="PDBsum" id="4CLK"/>
<dbReference type="PDBsum" id="4CLL"/>
<dbReference type="PDBsum" id="4CLP"/>
<dbReference type="PDBsum" id="4CLS"/>
<dbReference type="PDBsum" id="4CLT"/>
<dbReference type="PDBsum" id="4CLU"/>
<dbReference type="PDBsum" id="4CLW"/>
<dbReference type="PDBsum" id="4CLY"/>
<dbReference type="PDBsum" id="4CLZ"/>
<dbReference type="PDBsum" id="4CM0"/>
<dbReference type="PDBsum" id="4CM2"/>
<dbReference type="PDBsum" id="4OYA"/>
<dbReference type="PDBsum" id="4OYB"/>
<dbReference type="PDBsum" id="4OYI"/>
<dbReference type="PDBsum" id="4OYM"/>
<dbReference type="PDBsum" id="4OYO"/>
<dbReference type="PDBsum" id="4OYP"/>
<dbReference type="PDBsum" id="4OYW"/>
<dbReference type="PDBsum" id="4OYX"/>
<dbReference type="PDBsum" id="4OYZ"/>
<dbReference type="PDBsum" id="4OZ2"/>
<dbReference type="PDBsum" id="4OZ3"/>
<dbReference type="PDBsum" id="4UST"/>
<dbReference type="PDBsum" id="4USU"/>
<dbReference type="PDBsum" id="4USV"/>
<dbReference type="PDBsum" id="4USW"/>
<dbReference type="PDBsum" id="5D0R"/>
<dbReference type="PDBsum" id="5IV3"/>
<dbReference type="PDBsum" id="5IV4"/>
<dbReference type="PDBsum" id="7OVD"/>
<dbReference type="PDBsum" id="8B75"/>
<dbReference type="PDBsum" id="8CNH"/>
<dbReference type="PDBsum" id="8CO7"/>
<dbReference type="PDBsum" id="8COJ"/>
<dbReference type="PDBsum" id="8COT"/>
<dbReference type="PDBsum" id="8IL7"/>
<dbReference type="SMR" id="Q96PN6"/>
<dbReference type="BioGRID" id="120921">
    <property type="interactions" value="3"/>
</dbReference>
<dbReference type="FunCoup" id="Q96PN6">
    <property type="interactions" value="500"/>
</dbReference>
<dbReference type="IntAct" id="Q96PN6">
    <property type="interactions" value="3"/>
</dbReference>
<dbReference type="MINT" id="Q96PN6"/>
<dbReference type="STRING" id="9606.ENSP00000356825"/>
<dbReference type="BindingDB" id="Q96PN6"/>
<dbReference type="ChEMBL" id="CHEMBL5854"/>
<dbReference type="DrugBank" id="DB02587">
    <property type="generic name" value="Colforsin"/>
</dbReference>
<dbReference type="GuidetoPHARMACOLOGY" id="3068"/>
<dbReference type="GlyGen" id="Q96PN6">
    <property type="glycosylation" value="3 sites, 1 O-linked glycan (3 sites)"/>
</dbReference>
<dbReference type="iPTMnet" id="Q96PN6"/>
<dbReference type="PhosphoSitePlus" id="Q96PN6"/>
<dbReference type="SwissPalm" id="Q96PN6"/>
<dbReference type="BioMuta" id="ADCY10"/>
<dbReference type="DMDM" id="308153637"/>
<dbReference type="MassIVE" id="Q96PN6"/>
<dbReference type="PaxDb" id="9606-ENSP00000356825"/>
<dbReference type="PeptideAtlas" id="Q96PN6"/>
<dbReference type="ProteomicsDB" id="24204"/>
<dbReference type="ProteomicsDB" id="77715">
    <molecule id="Q96PN6-1"/>
</dbReference>
<dbReference type="ProteomicsDB" id="77716">
    <molecule id="Q96PN6-2"/>
</dbReference>
<dbReference type="ProteomicsDB" id="77717">
    <molecule id="Q96PN6-3"/>
</dbReference>
<dbReference type="Antibodypedia" id="3017">
    <property type="antibodies" value="154 antibodies from 24 providers"/>
</dbReference>
<dbReference type="DNASU" id="55811"/>
<dbReference type="Ensembl" id="ENST00000367848.1">
    <molecule id="Q96PN6-2"/>
    <property type="protein sequence ID" value="ENSP00000356822.1"/>
    <property type="gene ID" value="ENSG00000143199.18"/>
</dbReference>
<dbReference type="Ensembl" id="ENST00000367851.9">
    <molecule id="Q96PN6-1"/>
    <property type="protein sequence ID" value="ENSP00000356825.4"/>
    <property type="gene ID" value="ENSG00000143199.18"/>
</dbReference>
<dbReference type="Ensembl" id="ENST00000545172.5">
    <molecule id="Q96PN6-4"/>
    <property type="protein sequence ID" value="ENSP00000441992.1"/>
    <property type="gene ID" value="ENSG00000143199.18"/>
</dbReference>
<dbReference type="GeneID" id="55811"/>
<dbReference type="KEGG" id="hsa:55811"/>
<dbReference type="MANE-Select" id="ENST00000367851.9">
    <property type="protein sequence ID" value="ENSP00000356825.4"/>
    <property type="RefSeq nucleotide sequence ID" value="NM_018417.6"/>
    <property type="RefSeq protein sequence ID" value="NP_060887.2"/>
</dbReference>
<dbReference type="UCSC" id="uc001ger.4">
    <molecule id="Q96PN6-1"/>
    <property type="organism name" value="human"/>
</dbReference>
<dbReference type="AGR" id="HGNC:21285"/>
<dbReference type="CTD" id="55811"/>
<dbReference type="DisGeNET" id="55811"/>
<dbReference type="GeneCards" id="ADCY10"/>
<dbReference type="HGNC" id="HGNC:21285">
    <property type="gene designation" value="ADCY10"/>
</dbReference>
<dbReference type="HPA" id="ENSG00000143199">
    <property type="expression patterns" value="Group enriched (liver, testis)"/>
</dbReference>
<dbReference type="MalaCards" id="ADCY10"/>
<dbReference type="MIM" id="143870">
    <property type="type" value="phenotype"/>
</dbReference>
<dbReference type="MIM" id="605205">
    <property type="type" value="gene"/>
</dbReference>
<dbReference type="neXtProt" id="NX_Q96PN6"/>
<dbReference type="OpenTargets" id="ENSG00000143199"/>
<dbReference type="Orphanet" id="2197">
    <property type="disease" value="Idiopathic hypercalciuria"/>
</dbReference>
<dbReference type="PharmGKB" id="PA162375618"/>
<dbReference type="VEuPathDB" id="HostDB:ENSG00000143199"/>
<dbReference type="eggNOG" id="ENOG502QPPT">
    <property type="taxonomic scope" value="Eukaryota"/>
</dbReference>
<dbReference type="GeneTree" id="ENSGT00390000001322"/>
<dbReference type="HOGENOM" id="CLU_004055_1_0_1"/>
<dbReference type="InParanoid" id="Q96PN6"/>
<dbReference type="OMA" id="HIIRFCK"/>
<dbReference type="OrthoDB" id="194468at2759"/>
<dbReference type="PAN-GO" id="Q96PN6">
    <property type="GO annotations" value="2 GO annotations based on evolutionary models"/>
</dbReference>
<dbReference type="PhylomeDB" id="Q96PN6"/>
<dbReference type="TreeFam" id="TF329284"/>
<dbReference type="BRENDA" id="4.6.1.1">
    <property type="organism ID" value="2681"/>
</dbReference>
<dbReference type="PathwayCommons" id="Q96PN6"/>
<dbReference type="Reactome" id="R-HSA-5610787">
    <property type="pathway name" value="Hedgehog 'off' state"/>
</dbReference>
<dbReference type="SABIO-RK" id="Q96PN6"/>
<dbReference type="SignaLink" id="Q96PN6"/>
<dbReference type="SIGNOR" id="Q96PN6"/>
<dbReference type="BioGRID-ORCS" id="55811">
    <property type="hits" value="8 hits in 1145 CRISPR screens"/>
</dbReference>
<dbReference type="ChiTaRS" id="ADCY10">
    <property type="organism name" value="human"/>
</dbReference>
<dbReference type="EvolutionaryTrace" id="Q96PN6"/>
<dbReference type="GeneWiki" id="ADCY10"/>
<dbReference type="GenomeRNAi" id="55811"/>
<dbReference type="Pharos" id="Q96PN6">
    <property type="development level" value="Tchem"/>
</dbReference>
<dbReference type="PRO" id="PR:Q96PN6"/>
<dbReference type="Proteomes" id="UP000005640">
    <property type="component" value="Chromosome 1"/>
</dbReference>
<dbReference type="RNAct" id="Q96PN6">
    <property type="molecule type" value="protein"/>
</dbReference>
<dbReference type="Bgee" id="ENSG00000143199">
    <property type="expression patterns" value="Expressed in sperm and 101 other cell types or tissues"/>
</dbReference>
<dbReference type="ExpressionAtlas" id="Q96PN6">
    <property type="expression patterns" value="baseline and differential"/>
</dbReference>
<dbReference type="GO" id="GO:0045177">
    <property type="term" value="C:apical part of cell"/>
    <property type="evidence" value="ECO:0007669"/>
    <property type="project" value="Ensembl"/>
</dbReference>
<dbReference type="GO" id="GO:0097450">
    <property type="term" value="C:astrocyte end-foot"/>
    <property type="evidence" value="ECO:0007669"/>
    <property type="project" value="Ensembl"/>
</dbReference>
<dbReference type="GO" id="GO:0045178">
    <property type="term" value="C:basal part of cell"/>
    <property type="evidence" value="ECO:0007669"/>
    <property type="project" value="Ensembl"/>
</dbReference>
<dbReference type="GO" id="GO:0090724">
    <property type="term" value="C:central region of growth cone"/>
    <property type="evidence" value="ECO:0007669"/>
    <property type="project" value="Ensembl"/>
</dbReference>
<dbReference type="GO" id="GO:0005929">
    <property type="term" value="C:cilium"/>
    <property type="evidence" value="ECO:0007669"/>
    <property type="project" value="UniProtKB-SubCell"/>
</dbReference>
<dbReference type="GO" id="GO:0005737">
    <property type="term" value="C:cytoplasm"/>
    <property type="evidence" value="ECO:0000318"/>
    <property type="project" value="GO_Central"/>
</dbReference>
<dbReference type="GO" id="GO:0005856">
    <property type="term" value="C:cytoskeleton"/>
    <property type="evidence" value="ECO:0007669"/>
    <property type="project" value="UniProtKB-SubCell"/>
</dbReference>
<dbReference type="GO" id="GO:0005829">
    <property type="term" value="C:cytosol"/>
    <property type="evidence" value="ECO:0000303"/>
    <property type="project" value="UniProtKB"/>
</dbReference>
<dbReference type="GO" id="GO:0030425">
    <property type="term" value="C:dendrite"/>
    <property type="evidence" value="ECO:0007669"/>
    <property type="project" value="Ensembl"/>
</dbReference>
<dbReference type="GO" id="GO:0005576">
    <property type="term" value="C:extracellular region"/>
    <property type="evidence" value="ECO:0007669"/>
    <property type="project" value="GOC"/>
</dbReference>
<dbReference type="GO" id="GO:0005739">
    <property type="term" value="C:mitochondrion"/>
    <property type="evidence" value="ECO:0006056"/>
    <property type="project" value="FlyBase"/>
</dbReference>
<dbReference type="GO" id="GO:0043025">
    <property type="term" value="C:neuronal cell body"/>
    <property type="evidence" value="ECO:0007669"/>
    <property type="project" value="Ensembl"/>
</dbReference>
<dbReference type="GO" id="GO:0005634">
    <property type="term" value="C:nucleus"/>
    <property type="evidence" value="ECO:0000314"/>
    <property type="project" value="UniProtKB"/>
</dbReference>
<dbReference type="GO" id="GO:0048471">
    <property type="term" value="C:perinuclear region of cytoplasm"/>
    <property type="evidence" value="ECO:0000314"/>
    <property type="project" value="UniProtKB"/>
</dbReference>
<dbReference type="GO" id="GO:0005886">
    <property type="term" value="C:plasma membrane"/>
    <property type="evidence" value="ECO:0007669"/>
    <property type="project" value="UniProtKB-SubCell"/>
</dbReference>
<dbReference type="GO" id="GO:0004016">
    <property type="term" value="F:adenylate cyclase activity"/>
    <property type="evidence" value="ECO:0000314"/>
    <property type="project" value="UniProtKB"/>
</dbReference>
<dbReference type="GO" id="GO:0005524">
    <property type="term" value="F:ATP binding"/>
    <property type="evidence" value="ECO:0007669"/>
    <property type="project" value="UniProtKB-KW"/>
</dbReference>
<dbReference type="GO" id="GO:0051117">
    <property type="term" value="F:ATPase binding"/>
    <property type="evidence" value="ECO:0007669"/>
    <property type="project" value="Ensembl"/>
</dbReference>
<dbReference type="GO" id="GO:0071890">
    <property type="term" value="F:bicarbonate binding"/>
    <property type="evidence" value="ECO:0000314"/>
    <property type="project" value="UniProtKB"/>
</dbReference>
<dbReference type="GO" id="GO:0000287">
    <property type="term" value="F:magnesium ion binding"/>
    <property type="evidence" value="ECO:0007669"/>
    <property type="project" value="InterPro"/>
</dbReference>
<dbReference type="GO" id="GO:0030145">
    <property type="term" value="F:manganese ion binding"/>
    <property type="evidence" value="ECO:0007669"/>
    <property type="project" value="Ensembl"/>
</dbReference>
<dbReference type="GO" id="GO:0006171">
    <property type="term" value="P:cAMP biosynthetic process"/>
    <property type="evidence" value="ECO:0000314"/>
    <property type="project" value="UniProtKB"/>
</dbReference>
<dbReference type="GO" id="GO:0003351">
    <property type="term" value="P:epithelial cilium movement involved in extracellular fluid movement"/>
    <property type="evidence" value="ECO:0000315"/>
    <property type="project" value="UniProtKB"/>
</dbReference>
<dbReference type="GO" id="GO:0006007">
    <property type="term" value="P:glucose catabolic process"/>
    <property type="evidence" value="ECO:0007669"/>
    <property type="project" value="Ensembl"/>
</dbReference>
<dbReference type="GO" id="GO:0035556">
    <property type="term" value="P:intracellular signal transduction"/>
    <property type="evidence" value="ECO:0007669"/>
    <property type="project" value="InterPro"/>
</dbReference>
<dbReference type="GO" id="GO:1990544">
    <property type="term" value="P:mitochondrial ATP transmembrane transport"/>
    <property type="evidence" value="ECO:0007669"/>
    <property type="project" value="Ensembl"/>
</dbReference>
<dbReference type="GO" id="GO:0106135">
    <property type="term" value="P:negative regulation of cardiac muscle cell contraction"/>
    <property type="evidence" value="ECO:0007669"/>
    <property type="project" value="Ensembl"/>
</dbReference>
<dbReference type="GO" id="GO:0010917">
    <property type="term" value="P:negative regulation of mitochondrial membrane potential"/>
    <property type="evidence" value="ECO:0007669"/>
    <property type="project" value="Ensembl"/>
</dbReference>
<dbReference type="GO" id="GO:1903427">
    <property type="term" value="P:negative regulation of reactive oxygen species biosynthetic process"/>
    <property type="evidence" value="ECO:0007669"/>
    <property type="project" value="Ensembl"/>
</dbReference>
<dbReference type="GO" id="GO:1990138">
    <property type="term" value="P:neuron projection extension"/>
    <property type="evidence" value="ECO:0007669"/>
    <property type="project" value="Ensembl"/>
</dbReference>
<dbReference type="GO" id="GO:1990535">
    <property type="term" value="P:neuron projection maintenance"/>
    <property type="evidence" value="ECO:0007669"/>
    <property type="project" value="Ensembl"/>
</dbReference>
<dbReference type="GO" id="GO:0106028">
    <property type="term" value="P:neuron projection retraction"/>
    <property type="evidence" value="ECO:0007669"/>
    <property type="project" value="Ensembl"/>
</dbReference>
<dbReference type="GO" id="GO:2001171">
    <property type="term" value="P:positive regulation of ATP biosynthetic process"/>
    <property type="evidence" value="ECO:0007669"/>
    <property type="project" value="Ensembl"/>
</dbReference>
<dbReference type="GO" id="GO:0045773">
    <property type="term" value="P:positive regulation of axon extension"/>
    <property type="evidence" value="ECO:0007669"/>
    <property type="project" value="Ensembl"/>
</dbReference>
<dbReference type="GO" id="GO:0010666">
    <property type="term" value="P:positive regulation of cardiac muscle cell apoptotic process"/>
    <property type="evidence" value="ECO:0007669"/>
    <property type="project" value="Ensembl"/>
</dbReference>
<dbReference type="GO" id="GO:0010613">
    <property type="term" value="P:positive regulation of cardiac muscle hypertrophy"/>
    <property type="evidence" value="ECO:0007669"/>
    <property type="project" value="Ensembl"/>
</dbReference>
<dbReference type="GO" id="GO:0045819">
    <property type="term" value="P:positive regulation of glycogen catabolic process"/>
    <property type="evidence" value="ECO:0007669"/>
    <property type="project" value="Ensembl"/>
</dbReference>
<dbReference type="GO" id="GO:0051901">
    <property type="term" value="P:positive regulation of mitochondrial depolarization"/>
    <property type="evidence" value="ECO:0007669"/>
    <property type="project" value="Ensembl"/>
</dbReference>
<dbReference type="GO" id="GO:0045778">
    <property type="term" value="P:positive regulation of ossification"/>
    <property type="evidence" value="ECO:0007669"/>
    <property type="project" value="Ensembl"/>
</dbReference>
<dbReference type="GO" id="GO:1903378">
    <property type="term" value="P:positive regulation of oxidative stress-induced neuron intrinsic apoptotic signaling pathway"/>
    <property type="evidence" value="ECO:0007669"/>
    <property type="project" value="Ensembl"/>
</dbReference>
<dbReference type="GO" id="GO:1903955">
    <property type="term" value="P:positive regulation of protein targeting to mitochondrion"/>
    <property type="evidence" value="ECO:0007669"/>
    <property type="project" value="Ensembl"/>
</dbReference>
<dbReference type="GO" id="GO:1903428">
    <property type="term" value="P:positive regulation of reactive oxygen species biosynthetic process"/>
    <property type="evidence" value="ECO:0007669"/>
    <property type="project" value="Ensembl"/>
</dbReference>
<dbReference type="GO" id="GO:1905461">
    <property type="term" value="P:positive regulation of vascular associated smooth muscle cell apoptotic process"/>
    <property type="evidence" value="ECO:0007669"/>
    <property type="project" value="Ensembl"/>
</dbReference>
<dbReference type="GO" id="GO:0060306">
    <property type="term" value="P:regulation of membrane repolarization"/>
    <property type="evidence" value="ECO:0007669"/>
    <property type="project" value="Ensembl"/>
</dbReference>
<dbReference type="GO" id="GO:1901524">
    <property type="term" value="P:regulation of mitophagy"/>
    <property type="evidence" value="ECO:0007669"/>
    <property type="project" value="Ensembl"/>
</dbReference>
<dbReference type="GO" id="GO:0007286">
    <property type="term" value="P:spermatid development"/>
    <property type="evidence" value="ECO:0007669"/>
    <property type="project" value="Ensembl"/>
</dbReference>
<dbReference type="CDD" id="cd07302">
    <property type="entry name" value="CHD"/>
    <property type="match status" value="2"/>
</dbReference>
<dbReference type="FunFam" id="3.30.70.1230:FF:000017">
    <property type="entry name" value="Adenylate cyclase type 10"/>
    <property type="match status" value="1"/>
</dbReference>
<dbReference type="FunFam" id="3.30.70.1230:FF:000021">
    <property type="entry name" value="Adenylate cyclase type 10"/>
    <property type="match status" value="1"/>
</dbReference>
<dbReference type="FunFam" id="3.40.50.300:FF:001623">
    <property type="entry name" value="Adenylate cyclase type 10"/>
    <property type="match status" value="1"/>
</dbReference>
<dbReference type="Gene3D" id="3.30.70.1230">
    <property type="entry name" value="Nucleotide cyclase"/>
    <property type="match status" value="2"/>
</dbReference>
<dbReference type="Gene3D" id="3.40.50.300">
    <property type="entry name" value="P-loop containing nucleotide triphosphate hydrolases"/>
    <property type="match status" value="1"/>
</dbReference>
<dbReference type="InterPro" id="IPR001054">
    <property type="entry name" value="A/G_cyclase"/>
</dbReference>
<dbReference type="InterPro" id="IPR016577">
    <property type="entry name" value="Adenylate_cyclase_typ10"/>
</dbReference>
<dbReference type="InterPro" id="IPR029787">
    <property type="entry name" value="Nucleotide_cyclase"/>
</dbReference>
<dbReference type="InterPro" id="IPR027417">
    <property type="entry name" value="P-loop_NTPase"/>
</dbReference>
<dbReference type="PANTHER" id="PTHR16305:SF32">
    <property type="entry name" value="ADENYLATE CYCLASE TYPE 10"/>
    <property type="match status" value="1"/>
</dbReference>
<dbReference type="PANTHER" id="PTHR16305">
    <property type="entry name" value="TESTICULAR SOLUBLE ADENYLYL CYCLASE"/>
    <property type="match status" value="1"/>
</dbReference>
<dbReference type="Pfam" id="PF00211">
    <property type="entry name" value="Guanylate_cyc"/>
    <property type="match status" value="2"/>
</dbReference>
<dbReference type="PIRSF" id="PIRSF011131">
    <property type="entry name" value="Soluble_adenylyl_cyclase"/>
    <property type="match status" value="1"/>
</dbReference>
<dbReference type="SUPFAM" id="SSF55073">
    <property type="entry name" value="Nucleotide cyclase"/>
    <property type="match status" value="2"/>
</dbReference>
<dbReference type="SUPFAM" id="SSF52540">
    <property type="entry name" value="P-loop containing nucleoside triphosphate hydrolases"/>
    <property type="match status" value="1"/>
</dbReference>
<dbReference type="PROSITE" id="PS50125">
    <property type="entry name" value="GUANYLATE_CYCLASE_2"/>
    <property type="match status" value="2"/>
</dbReference>
<organism>
    <name type="scientific">Homo sapiens</name>
    <name type="common">Human</name>
    <dbReference type="NCBI Taxonomy" id="9606"/>
    <lineage>
        <taxon>Eukaryota</taxon>
        <taxon>Metazoa</taxon>
        <taxon>Chordata</taxon>
        <taxon>Craniata</taxon>
        <taxon>Vertebrata</taxon>
        <taxon>Euteleostomi</taxon>
        <taxon>Mammalia</taxon>
        <taxon>Eutheria</taxon>
        <taxon>Euarchontoglires</taxon>
        <taxon>Primates</taxon>
        <taxon>Haplorrhini</taxon>
        <taxon>Catarrhini</taxon>
        <taxon>Hominidae</taxon>
        <taxon>Homo</taxon>
    </lineage>
</organism>
<protein>
    <recommendedName>
        <fullName>Adenylate cyclase type 10</fullName>
        <ecNumber evidence="6 7 9 10 11">4.6.1.1</ecNumber>
    </recommendedName>
    <alternativeName>
        <fullName>AH-related protein</fullName>
    </alternativeName>
    <alternativeName>
        <fullName>Adenylate cyclase homolog</fullName>
    </alternativeName>
    <alternativeName>
        <fullName evidence="12">Germ cell soluble adenylyl cyclase</fullName>
        <shortName>hsAC</shortName>
        <shortName evidence="14 16">sAC</shortName>
    </alternativeName>
    <alternativeName>
        <fullName>Testicular soluble adenylyl cyclase</fullName>
    </alternativeName>
</protein>
<sequence>MNTPKEEFQDWPIVRIAAHLPDLIVYGHFSPERPFMDYFDGVLMFVDISGFTAMTEKFSSAMYMDRGAEQLVEILNYHISAIVEKVLIFGGDILKFAGDALLALWRVERKQLKNIITVVIKCSLEIHGLFETQEWEEGLDIRVKIGLAAGHISMLVFGDETHSHFLVIGQAVDDVRLAQNMAQMNDVILSPNCWQLCDRSMIEIESVPDQRAVKVNFLKPPPNFNFDEFFTKCTTFMHYYPSGEHKNLLRLACTLKPDPELEMSLQKYVMESILKQIDNKQLQGYLSELRPVTIVFVNLMFEDQDKAEEIGPAIQDAYMHITSVLKIFQGQINKVFMFDKGCSFLCVFGFPGEKVPDELTHALECAMDIFDFCSQVHKIQTVSIGVASGIVFCGIVGHTVRHEYTVIGQKVNLAARMMMYYPGIVTCDSVTYNGSNLPAYFFKELPKKVMKGVADSGPLYQYWGRTEKVMFGMACLICNRKEDYPLLGRNKEINYFMYTMKKFLISNSSQVLMYEGLPGYGKSQILMKIEYLAQGKNHRIIAISLNKISFHQTFYTIQMFMANVLGLDTCKHYKERQTNLRNKVMTLLDEKFYCLLNDIFHVQFPISREISRMSTLKKQKQLEILFMKILKLIVKEERIIFIIDEAQFVDSTSWRFMEKLIRTLPIFIIMSLCPFVNIPCAAARAVIKNRNTTYIVIGAVQPNDISNKICLDLNVSCISKELDSYLGEGSCGIPFYCEELLKNLEHHEVLVFQQTESEEKTNRTWNNLFKYSIKLTEKLNMVTLHSDKESEEVCHLTSGVRLKNLSPPTSLKEISLIQLDSMRLSHQMLVRCAAIIGLTFTTELLFEILPCWNMKMMIKTLATLVESNIFYCFRNGKELQKALKQNDPSFEVHYRSLSLKPSEGMDHGEEEQLRELENEVIECHRIRFCNPMMQKTAYELWLKDQRKAMHLKCARFLEEDAHRCDHCRGRDFIPYHHFTVNIRLNALDMDAIKKMAMSHGFKTEEKLILSNSEIPETSAFFPENRSPEEIREKILNFFDHVLTKMKTSDEDIIPLESCQCEEILEIVILPLAHHFLALGENDKALYYFLEIASAYLIFCDNYMAYMYLNEGQKLLKTLKKDKSWSQTFESATFYSLKGEVCFNMGQIVLAKKMLRKALKLLNRIFPYNLISLFLHIHVEKNRHFHYVNRQAQESPPPGKKRLAQLYRQTVCLSLLWRIYSYSYLFHCKYYAHLAVMMQMNTALETQNCFQIIKAYLDYSLYHHLAGYKGVWFKYEVMAMEHIFNLPLKGEGIEIVAYVAETLVFNKLIMGHLDLAIELGSRALQMWALLQNPNRHYQSLCRLSRCLLLNSRYPQLIQVLGRLWELSVTQEHIFSKAFFYFVCLDILLYSGFVYRTFEECLEFIHQYENNRILKFHSGLLLGLYSSVAIWYARLQEWDNFYKFSNRAKNLLPRRTMTLTYYDGISRYMEGQVLHLQKQIKEQSENAQASGEELLKNLENLVAQNTTGPVFCPRLYHLMAYVCILMGDGQKCGLFLNTALRLSETQGNILEKCWLNMNKESWYSTSELKEDQWLQTILSLPSWEKIVAGRVNIQDLQKNKFLMRANTVDNHF</sequence>
<feature type="chain" id="PRO_0000317101" description="Adenylate cyclase type 10">
    <location>
        <begin position="1"/>
        <end position="1610"/>
    </location>
</feature>
<feature type="domain" description="Guanylate cyclase 1" evidence="2">
    <location>
        <begin position="42"/>
        <end position="179"/>
    </location>
</feature>
<feature type="domain" description="Guanylate cyclase 2" evidence="2">
    <location>
        <begin position="293"/>
        <end position="418"/>
    </location>
</feature>
<feature type="binding site" evidence="11 19 20 32">
    <location>
        <begin position="47"/>
        <end position="52"/>
    </location>
    <ligand>
        <name>ATP</name>
        <dbReference type="ChEBI" id="CHEBI:30616"/>
    </ligand>
</feature>
<feature type="binding site" evidence="2 11 19 20">
    <location>
        <position position="47"/>
    </location>
    <ligand>
        <name>Mg(2+)</name>
        <dbReference type="ChEBI" id="CHEBI:18420"/>
        <label>1</label>
    </ligand>
</feature>
<feature type="binding site" evidence="2">
    <location>
        <position position="47"/>
    </location>
    <ligand>
        <name>Mg(2+)</name>
        <dbReference type="ChEBI" id="CHEBI:18420"/>
        <label>2</label>
    </ligand>
</feature>
<feature type="binding site" evidence="2">
    <location>
        <position position="48"/>
    </location>
    <ligand>
        <name>Mg(2+)</name>
        <dbReference type="ChEBI" id="CHEBI:18420"/>
        <label>2</label>
    </ligand>
</feature>
<feature type="binding site" evidence="9 10 24 28">
    <location>
        <position position="95"/>
    </location>
    <ligand>
        <name>hydrogencarbonate</name>
        <dbReference type="ChEBI" id="CHEBI:17544"/>
    </ligand>
</feature>
<feature type="binding site" evidence="11 19 20 32">
    <location>
        <position position="99"/>
    </location>
    <ligand>
        <name>ATP</name>
        <dbReference type="ChEBI" id="CHEBI:30616"/>
    </ligand>
</feature>
<feature type="binding site" evidence="2 11 19 20">
    <location>
        <position position="99"/>
    </location>
    <ligand>
        <name>Mg(2+)</name>
        <dbReference type="ChEBI" id="CHEBI:18420"/>
        <label>1</label>
    </ligand>
</feature>
<feature type="binding site" evidence="2">
    <location>
        <position position="99"/>
    </location>
    <ligand>
        <name>Mg(2+)</name>
        <dbReference type="ChEBI" id="CHEBI:18420"/>
        <label>2</label>
    </ligand>
</feature>
<feature type="binding site" evidence="11 19 20 32">
    <location>
        <position position="144"/>
    </location>
    <ligand>
        <name>ATP</name>
        <dbReference type="ChEBI" id="CHEBI:30616"/>
    </ligand>
</feature>
<feature type="binding site" evidence="9 10 24 28">
    <location>
        <position position="167"/>
    </location>
    <ligand>
        <name>hydrogencarbonate</name>
        <dbReference type="ChEBI" id="CHEBI:17544"/>
    </ligand>
</feature>
<feature type="binding site" evidence="9 10 24 28">
    <location>
        <position position="176"/>
    </location>
    <ligand>
        <name>hydrogencarbonate</name>
        <dbReference type="ChEBI" id="CHEBI:17544"/>
    </ligand>
</feature>
<feature type="binding site" evidence="9 10 24 28">
    <location>
        <position position="337"/>
    </location>
    <ligand>
        <name>hydrogencarbonate</name>
        <dbReference type="ChEBI" id="CHEBI:17544"/>
    </ligand>
</feature>
<feature type="binding site" evidence="11 19 20 32">
    <location>
        <position position="406"/>
    </location>
    <ligand>
        <name>ATP</name>
        <dbReference type="ChEBI" id="CHEBI:30616"/>
    </ligand>
</feature>
<feature type="binding site" evidence="19 20 21">
    <location>
        <begin position="412"/>
        <end position="416"/>
    </location>
    <ligand>
        <name>ATP</name>
        <dbReference type="ChEBI" id="CHEBI:30616"/>
    </ligand>
</feature>
<feature type="splice variant" id="VSP_030866" description="In isoform 3." evidence="17">
    <location>
        <begin position="1"/>
        <end position="1099"/>
    </location>
</feature>
<feature type="splice variant" id="VSP_046329" description="In isoform 4." evidence="15">
    <location>
        <begin position="1"/>
        <end position="153"/>
    </location>
</feature>
<feature type="splice variant" id="VSP_030867" description="In isoform 2." evidence="13">
    <original>MNTPKEEFQDWPIVRIAAHLPDLIVYGHFSPERPFMDYFDGVLMFVDISGFTAMTEKFSSAMYMDRGAEQLVEILNYHISAIVEKVLIFGGDILKFA</original>
    <variation>MSLSE</variation>
    <location>
        <begin position="1"/>
        <end position="97"/>
    </location>
</feature>
<feature type="splice variant" id="VSP_030868" description="In isoform 3." evidence="17">
    <original>DNYM</original>
    <variation>MLFK</variation>
    <location>
        <begin position="1100"/>
        <end position="1103"/>
    </location>
</feature>
<feature type="splice variant" id="VSP_030869" description="In isoform 3." evidence="17">
    <original>YARLQEWDNFYKFSNRAKNLLPRRTMTLTYYDGISRYMEGQV</original>
    <variation>ECEAGVGRRLHTSRDPGMPDFRNGTTFTNFPIELKIFCQEEP</variation>
    <location>
        <begin position="1430"/>
        <end position="1471"/>
    </location>
</feature>
<feature type="splice variant" id="VSP_030870" description="In isoform 3." evidence="17">
    <location>
        <begin position="1472"/>
        <end position="1610"/>
    </location>
</feature>
<feature type="sequence variant" id="VAR_038476" description="In dbSNP:rs16859886.">
    <original>T</original>
    <variation>M</variation>
    <location>
        <position position="234"/>
    </location>
</feature>
<feature type="sequence variant" id="VAR_038477" description="In dbSNP:rs2071921." evidence="3 4 6">
    <original>I</original>
    <variation>V</variation>
    <location>
        <position position="697"/>
    </location>
</feature>
<feature type="mutagenesis site" description="Nearly abolishes bicarbonate-mediated increase of enzyme activity. Abolishes bicarbonate-mediated increase of enzyme activity; when associated with A-176." evidence="9">
    <original>K</original>
    <variation>A</variation>
    <location>
        <position position="95"/>
    </location>
</feature>
<feature type="mutagenesis site" description="Reduces bicarbonate-mediated increase of enzyme activity. Abolishes bicarbonate-mediated increase of enzyme activity; when associated with A-95." evidence="9">
    <original>R</original>
    <variation>A</variation>
    <location>
        <position position="176"/>
    </location>
</feature>
<feature type="sequence conflict" description="In Ref. 6; BAG64062." evidence="18" ref="6">
    <original>L</original>
    <variation>P</variation>
    <location>
        <position position="942"/>
    </location>
</feature>
<feature type="sequence conflict" description="In Ref. 4; AAK96045." evidence="18" ref="4">
    <original>L</original>
    <variation>P</variation>
    <location>
        <position position="1359"/>
    </location>
</feature>
<feature type="helix" evidence="33">
    <location>
        <begin position="12"/>
        <end position="17"/>
    </location>
</feature>
<feature type="helix" evidence="33">
    <location>
        <begin position="22"/>
        <end position="25"/>
    </location>
</feature>
<feature type="strand" evidence="33">
    <location>
        <begin position="33"/>
        <end position="47"/>
    </location>
</feature>
<feature type="helix" evidence="33">
    <location>
        <begin position="49"/>
        <end position="52"/>
    </location>
</feature>
<feature type="helix" evidence="33">
    <location>
        <begin position="55"/>
        <end position="59"/>
    </location>
</feature>
<feature type="helix" evidence="33">
    <location>
        <begin position="61"/>
        <end position="63"/>
    </location>
</feature>
<feature type="helix" evidence="33">
    <location>
        <begin position="67"/>
        <end position="88"/>
    </location>
</feature>
<feature type="strand" evidence="33">
    <location>
        <begin position="92"/>
        <end position="96"/>
    </location>
</feature>
<feature type="strand" evidence="33">
    <location>
        <begin position="98"/>
        <end position="106"/>
    </location>
</feature>
<feature type="helix" evidence="33">
    <location>
        <begin position="109"/>
        <end position="111"/>
    </location>
</feature>
<feature type="helix" evidence="33">
    <location>
        <begin position="112"/>
        <end position="129"/>
    </location>
</feature>
<feature type="turn" evidence="34">
    <location>
        <begin position="130"/>
        <end position="132"/>
    </location>
</feature>
<feature type="strand" evidence="34">
    <location>
        <begin position="135"/>
        <end position="138"/>
    </location>
</feature>
<feature type="strand" evidence="33">
    <location>
        <begin position="144"/>
        <end position="158"/>
    </location>
</feature>
<feature type="strand" evidence="33">
    <location>
        <begin position="163"/>
        <end position="169"/>
    </location>
</feature>
<feature type="helix" evidence="33">
    <location>
        <begin position="170"/>
        <end position="181"/>
    </location>
</feature>
<feature type="strand" evidence="33">
    <location>
        <begin position="187"/>
        <end position="189"/>
    </location>
</feature>
<feature type="helix" evidence="33">
    <location>
        <begin position="191"/>
        <end position="196"/>
    </location>
</feature>
<feature type="helix" evidence="33">
    <location>
        <begin position="199"/>
        <end position="201"/>
    </location>
</feature>
<feature type="strand" evidence="33">
    <location>
        <begin position="202"/>
        <end position="207"/>
    </location>
</feature>
<feature type="strand" evidence="33">
    <location>
        <begin position="210"/>
        <end position="218"/>
    </location>
</feature>
<feature type="helix" evidence="33">
    <location>
        <begin position="226"/>
        <end position="234"/>
    </location>
</feature>
<feature type="helix" evidence="33">
    <location>
        <begin position="243"/>
        <end position="245"/>
    </location>
</feature>
<feature type="helix" evidence="33">
    <location>
        <begin position="251"/>
        <end position="254"/>
    </location>
</feature>
<feature type="helix" evidence="33">
    <location>
        <begin position="259"/>
        <end position="266"/>
    </location>
</feature>
<feature type="helix" evidence="33">
    <location>
        <begin position="271"/>
        <end position="277"/>
    </location>
</feature>
<feature type="turn" evidence="33">
    <location>
        <begin position="283"/>
        <end position="286"/>
    </location>
</feature>
<feature type="strand" evidence="33">
    <location>
        <begin position="288"/>
        <end position="302"/>
    </location>
</feature>
<feature type="helix" evidence="33">
    <location>
        <begin position="307"/>
        <end position="327"/>
    </location>
</feature>
<feature type="strand" evidence="33">
    <location>
        <begin position="331"/>
        <end position="337"/>
    </location>
</feature>
<feature type="strand" evidence="33">
    <location>
        <begin position="339"/>
        <end position="349"/>
    </location>
</feature>
<feature type="turn" evidence="35">
    <location>
        <begin position="351"/>
        <end position="353"/>
    </location>
</feature>
<feature type="helix" evidence="33">
    <location>
        <begin position="358"/>
        <end position="374"/>
    </location>
</feature>
<feature type="strand" evidence="33">
    <location>
        <begin position="379"/>
        <end position="398"/>
    </location>
</feature>
<feature type="strand" evidence="33">
    <location>
        <begin position="401"/>
        <end position="408"/>
    </location>
</feature>
<feature type="helix" evidence="33">
    <location>
        <begin position="409"/>
        <end position="420"/>
    </location>
</feature>
<feature type="strand" evidence="33">
    <location>
        <begin position="424"/>
        <end position="427"/>
    </location>
</feature>
<feature type="helix" evidence="33">
    <location>
        <begin position="429"/>
        <end position="435"/>
    </location>
</feature>
<feature type="helix" evidence="33">
    <location>
        <begin position="439"/>
        <end position="441"/>
    </location>
</feature>
<feature type="strand" evidence="33">
    <location>
        <begin position="442"/>
        <end position="444"/>
    </location>
</feature>
<feature type="strand" evidence="33">
    <location>
        <begin position="460"/>
        <end position="462"/>
    </location>
</feature>
<feature type="strand" evidence="36">
    <location>
        <begin position="465"/>
        <end position="467"/>
    </location>
</feature>
<keyword id="KW-0002">3D-structure</keyword>
<keyword id="KW-0025">Alternative splicing</keyword>
<keyword id="KW-0067">ATP-binding</keyword>
<keyword id="KW-0115">cAMP biosynthesis</keyword>
<keyword id="KW-1003">Cell membrane</keyword>
<keyword id="KW-0966">Cell projection</keyword>
<keyword id="KW-0963">Cytoplasm</keyword>
<keyword id="KW-0206">Cytoskeleton</keyword>
<keyword id="KW-0456">Lyase</keyword>
<keyword id="KW-0460">Magnesium</keyword>
<keyword id="KW-0464">Manganese</keyword>
<keyword id="KW-0472">Membrane</keyword>
<keyword id="KW-0479">Metal-binding</keyword>
<keyword id="KW-0496">Mitochondrion</keyword>
<keyword id="KW-0547">Nucleotide-binding</keyword>
<keyword id="KW-0539">Nucleus</keyword>
<keyword id="KW-1267">Proteomics identification</keyword>
<keyword id="KW-1185">Reference proteome</keyword>
<keyword id="KW-0677">Repeat</keyword>
<name>ADCYA_HUMAN</name>
<reference key="1">
    <citation type="journal article" date="2001" name="J. Biol. Chem.">
        <title>Identification and functional analysis of splice variants of the germ cell soluble adenylyl cyclase.</title>
        <authorList>
            <person name="Jaiswal B.S."/>
            <person name="Conti M."/>
        </authorList>
    </citation>
    <scope>NUCLEOTIDE SEQUENCE [MRNA] (ISOFORM 1)</scope>
    <scope>VARIANT VAL-697</scope>
</reference>
<reference key="2">
    <citation type="journal article" date="2002" name="J. Clin. Endocrinol. Metab.">
        <title>Identification and characterization of a gene with base substitutions associated with the absorptive hypercalciuria phenotype and low spinal bone density.</title>
        <authorList>
            <person name="Reed B.Y."/>
            <person name="Gitomer W.L."/>
            <person name="Heller H.J."/>
            <person name="Hsu M.C."/>
            <person name="Lemke M."/>
            <person name="Padalino P."/>
            <person name="Pak C.Y.C."/>
        </authorList>
    </citation>
    <scope>NUCLEOTIDE SEQUENCE [MRNA] (ISOFORM 2)</scope>
    <scope>TISSUE SPECIFICITY</scope>
    <scope>INVOLVEMENT IN HCA2</scope>
    <scope>VARIANT VAL-697</scope>
    <source>
        <tissue>Intestine</tissue>
    </source>
</reference>
<reference key="3">
    <citation type="journal article" date="2003" name="J. Biol. Chem.">
        <title>Kinetic properties of 'soluble' adenylyl cyclase. Synergism between calcium and bicarbonate.</title>
        <authorList>
            <person name="Litvin T.N."/>
            <person name="Kamenetsky M."/>
            <person name="Zarifyan A."/>
            <person name="Buck J."/>
            <person name="Levin L.R."/>
        </authorList>
    </citation>
    <scope>NUCLEOTIDE SEQUENCE [MRNA] (ISOFORM 1)</scope>
    <scope>COFACTOR</scope>
    <scope>ACTIVITY REGULATION</scope>
    <scope>BIOPHYSICOCHEMICAL PROPERTIES</scope>
    <scope>CATALYTIC ACTIVITY</scope>
    <scope>VARIANT VAL-697</scope>
</reference>
<reference key="4">
    <citation type="submission" date="2000-08" db="EMBL/GenBank/DDBJ databases">
        <title>Cloning of a human testicular soluble adenylyl cyclase.</title>
        <authorList>
            <person name="Khole V.V."/>
            <person name="Westbrook V.A."/>
            <person name="Mandal A."/>
            <person name="Herr J.C."/>
            <person name="Visconti P.E."/>
        </authorList>
    </citation>
    <scope>NUCLEOTIDE SEQUENCE [MRNA] (ISOFORM 1)</scope>
</reference>
<reference key="5">
    <citation type="submission" date="1999-01" db="EMBL/GenBank/DDBJ databases">
        <authorList>
            <person name="Rhodes S."/>
        </authorList>
    </citation>
    <scope>NUCLEOTIDE SEQUENCE [LARGE SCALE MRNA] (ISOFORM 3)</scope>
</reference>
<reference key="6">
    <citation type="journal article" date="2004" name="Nat. Genet.">
        <title>Complete sequencing and characterization of 21,243 full-length human cDNAs.</title>
        <authorList>
            <person name="Ota T."/>
            <person name="Suzuki Y."/>
            <person name="Nishikawa T."/>
            <person name="Otsuki T."/>
            <person name="Sugiyama T."/>
            <person name="Irie R."/>
            <person name="Wakamatsu A."/>
            <person name="Hayashi K."/>
            <person name="Sato H."/>
            <person name="Nagai K."/>
            <person name="Kimura K."/>
            <person name="Makita H."/>
            <person name="Sekine M."/>
            <person name="Obayashi M."/>
            <person name="Nishi T."/>
            <person name="Shibahara T."/>
            <person name="Tanaka T."/>
            <person name="Ishii S."/>
            <person name="Yamamoto J."/>
            <person name="Saito K."/>
            <person name="Kawai Y."/>
            <person name="Isono Y."/>
            <person name="Nakamura Y."/>
            <person name="Nagahari K."/>
            <person name="Murakami K."/>
            <person name="Yasuda T."/>
            <person name="Iwayanagi T."/>
            <person name="Wagatsuma M."/>
            <person name="Shiratori A."/>
            <person name="Sudo H."/>
            <person name="Hosoiri T."/>
            <person name="Kaku Y."/>
            <person name="Kodaira H."/>
            <person name="Kondo H."/>
            <person name="Sugawara M."/>
            <person name="Takahashi M."/>
            <person name="Kanda K."/>
            <person name="Yokoi T."/>
            <person name="Furuya T."/>
            <person name="Kikkawa E."/>
            <person name="Omura Y."/>
            <person name="Abe K."/>
            <person name="Kamihara K."/>
            <person name="Katsuta N."/>
            <person name="Sato K."/>
            <person name="Tanikawa M."/>
            <person name="Yamazaki M."/>
            <person name="Ninomiya K."/>
            <person name="Ishibashi T."/>
            <person name="Yamashita H."/>
            <person name="Murakawa K."/>
            <person name="Fujimori K."/>
            <person name="Tanai H."/>
            <person name="Kimata M."/>
            <person name="Watanabe M."/>
            <person name="Hiraoka S."/>
            <person name="Chiba Y."/>
            <person name="Ishida S."/>
            <person name="Ono Y."/>
            <person name="Takiguchi S."/>
            <person name="Watanabe S."/>
            <person name="Yosida M."/>
            <person name="Hotuta T."/>
            <person name="Kusano J."/>
            <person name="Kanehori K."/>
            <person name="Takahashi-Fujii A."/>
            <person name="Hara H."/>
            <person name="Tanase T.-O."/>
            <person name="Nomura Y."/>
            <person name="Togiya S."/>
            <person name="Komai F."/>
            <person name="Hara R."/>
            <person name="Takeuchi K."/>
            <person name="Arita M."/>
            <person name="Imose N."/>
            <person name="Musashino K."/>
            <person name="Yuuki H."/>
            <person name="Oshima A."/>
            <person name="Sasaki N."/>
            <person name="Aotsuka S."/>
            <person name="Yoshikawa Y."/>
            <person name="Matsunawa H."/>
            <person name="Ichihara T."/>
            <person name="Shiohata N."/>
            <person name="Sano S."/>
            <person name="Moriya S."/>
            <person name="Momiyama H."/>
            <person name="Satoh N."/>
            <person name="Takami S."/>
            <person name="Terashima Y."/>
            <person name="Suzuki O."/>
            <person name="Nakagawa S."/>
            <person name="Senoh A."/>
            <person name="Mizoguchi H."/>
            <person name="Goto Y."/>
            <person name="Shimizu F."/>
            <person name="Wakebe H."/>
            <person name="Hishigaki H."/>
            <person name="Watanabe T."/>
            <person name="Sugiyama A."/>
            <person name="Takemoto M."/>
            <person name="Kawakami B."/>
            <person name="Yamazaki M."/>
            <person name="Watanabe K."/>
            <person name="Kumagai A."/>
            <person name="Itakura S."/>
            <person name="Fukuzumi Y."/>
            <person name="Fujimori Y."/>
            <person name="Komiyama M."/>
            <person name="Tashiro H."/>
            <person name="Tanigami A."/>
            <person name="Fujiwara T."/>
            <person name="Ono T."/>
            <person name="Yamada K."/>
            <person name="Fujii Y."/>
            <person name="Ozaki K."/>
            <person name="Hirao M."/>
            <person name="Ohmori Y."/>
            <person name="Kawabata A."/>
            <person name="Hikiji T."/>
            <person name="Kobatake N."/>
            <person name="Inagaki H."/>
            <person name="Ikema Y."/>
            <person name="Okamoto S."/>
            <person name="Okitani R."/>
            <person name="Kawakami T."/>
            <person name="Noguchi S."/>
            <person name="Itoh T."/>
            <person name="Shigeta K."/>
            <person name="Senba T."/>
            <person name="Matsumura K."/>
            <person name="Nakajima Y."/>
            <person name="Mizuno T."/>
            <person name="Morinaga M."/>
            <person name="Sasaki M."/>
            <person name="Togashi T."/>
            <person name="Oyama M."/>
            <person name="Hata H."/>
            <person name="Watanabe M."/>
            <person name="Komatsu T."/>
            <person name="Mizushima-Sugano J."/>
            <person name="Satoh T."/>
            <person name="Shirai Y."/>
            <person name="Takahashi Y."/>
            <person name="Nakagawa K."/>
            <person name="Okumura K."/>
            <person name="Nagase T."/>
            <person name="Nomura N."/>
            <person name="Kikuchi H."/>
            <person name="Masuho Y."/>
            <person name="Yamashita R."/>
            <person name="Nakai K."/>
            <person name="Yada T."/>
            <person name="Nakamura Y."/>
            <person name="Ohara O."/>
            <person name="Isogai T."/>
            <person name="Sugano S."/>
        </authorList>
    </citation>
    <scope>NUCLEOTIDE SEQUENCE [LARGE SCALE MRNA] (ISOFORM 4)</scope>
    <source>
        <tissue>Testis</tissue>
    </source>
</reference>
<reference key="7">
    <citation type="journal article" date="2006" name="Nature">
        <title>The DNA sequence and biological annotation of human chromosome 1.</title>
        <authorList>
            <person name="Gregory S.G."/>
            <person name="Barlow K.F."/>
            <person name="McLay K.E."/>
            <person name="Kaul R."/>
            <person name="Swarbreck D."/>
            <person name="Dunham A."/>
            <person name="Scott C.E."/>
            <person name="Howe K.L."/>
            <person name="Woodfine K."/>
            <person name="Spencer C.C.A."/>
            <person name="Jones M.C."/>
            <person name="Gillson C."/>
            <person name="Searle S."/>
            <person name="Zhou Y."/>
            <person name="Kokocinski F."/>
            <person name="McDonald L."/>
            <person name="Evans R."/>
            <person name="Phillips K."/>
            <person name="Atkinson A."/>
            <person name="Cooper R."/>
            <person name="Jones C."/>
            <person name="Hall R.E."/>
            <person name="Andrews T.D."/>
            <person name="Lloyd C."/>
            <person name="Ainscough R."/>
            <person name="Almeida J.P."/>
            <person name="Ambrose K.D."/>
            <person name="Anderson F."/>
            <person name="Andrew R.W."/>
            <person name="Ashwell R.I.S."/>
            <person name="Aubin K."/>
            <person name="Babbage A.K."/>
            <person name="Bagguley C.L."/>
            <person name="Bailey J."/>
            <person name="Beasley H."/>
            <person name="Bethel G."/>
            <person name="Bird C.P."/>
            <person name="Bray-Allen S."/>
            <person name="Brown J.Y."/>
            <person name="Brown A.J."/>
            <person name="Buckley D."/>
            <person name="Burton J."/>
            <person name="Bye J."/>
            <person name="Carder C."/>
            <person name="Chapman J.C."/>
            <person name="Clark S.Y."/>
            <person name="Clarke G."/>
            <person name="Clee C."/>
            <person name="Cobley V."/>
            <person name="Collier R.E."/>
            <person name="Corby N."/>
            <person name="Coville G.J."/>
            <person name="Davies J."/>
            <person name="Deadman R."/>
            <person name="Dunn M."/>
            <person name="Earthrowl M."/>
            <person name="Ellington A.G."/>
            <person name="Errington H."/>
            <person name="Frankish A."/>
            <person name="Frankland J."/>
            <person name="French L."/>
            <person name="Garner P."/>
            <person name="Garnett J."/>
            <person name="Gay L."/>
            <person name="Ghori M.R.J."/>
            <person name="Gibson R."/>
            <person name="Gilby L.M."/>
            <person name="Gillett W."/>
            <person name="Glithero R.J."/>
            <person name="Grafham D.V."/>
            <person name="Griffiths C."/>
            <person name="Griffiths-Jones S."/>
            <person name="Grocock R."/>
            <person name="Hammond S."/>
            <person name="Harrison E.S.I."/>
            <person name="Hart E."/>
            <person name="Haugen E."/>
            <person name="Heath P.D."/>
            <person name="Holmes S."/>
            <person name="Holt K."/>
            <person name="Howden P.J."/>
            <person name="Hunt A.R."/>
            <person name="Hunt S.E."/>
            <person name="Hunter G."/>
            <person name="Isherwood J."/>
            <person name="James R."/>
            <person name="Johnson C."/>
            <person name="Johnson D."/>
            <person name="Joy A."/>
            <person name="Kay M."/>
            <person name="Kershaw J.K."/>
            <person name="Kibukawa M."/>
            <person name="Kimberley A.M."/>
            <person name="King A."/>
            <person name="Knights A.J."/>
            <person name="Lad H."/>
            <person name="Laird G."/>
            <person name="Lawlor S."/>
            <person name="Leongamornlert D.A."/>
            <person name="Lloyd D.M."/>
            <person name="Loveland J."/>
            <person name="Lovell J."/>
            <person name="Lush M.J."/>
            <person name="Lyne R."/>
            <person name="Martin S."/>
            <person name="Mashreghi-Mohammadi M."/>
            <person name="Matthews L."/>
            <person name="Matthews N.S.W."/>
            <person name="McLaren S."/>
            <person name="Milne S."/>
            <person name="Mistry S."/>
            <person name="Moore M.J.F."/>
            <person name="Nickerson T."/>
            <person name="O'Dell C.N."/>
            <person name="Oliver K."/>
            <person name="Palmeiri A."/>
            <person name="Palmer S.A."/>
            <person name="Parker A."/>
            <person name="Patel D."/>
            <person name="Pearce A.V."/>
            <person name="Peck A.I."/>
            <person name="Pelan S."/>
            <person name="Phelps K."/>
            <person name="Phillimore B.J."/>
            <person name="Plumb R."/>
            <person name="Rajan J."/>
            <person name="Raymond C."/>
            <person name="Rouse G."/>
            <person name="Saenphimmachak C."/>
            <person name="Sehra H.K."/>
            <person name="Sheridan E."/>
            <person name="Shownkeen R."/>
            <person name="Sims S."/>
            <person name="Skuce C.D."/>
            <person name="Smith M."/>
            <person name="Steward C."/>
            <person name="Subramanian S."/>
            <person name="Sycamore N."/>
            <person name="Tracey A."/>
            <person name="Tromans A."/>
            <person name="Van Helmond Z."/>
            <person name="Wall M."/>
            <person name="Wallis J.M."/>
            <person name="White S."/>
            <person name="Whitehead S.L."/>
            <person name="Wilkinson J.E."/>
            <person name="Willey D.L."/>
            <person name="Williams H."/>
            <person name="Wilming L."/>
            <person name="Wray P.W."/>
            <person name="Wu Z."/>
            <person name="Coulson A."/>
            <person name="Vaudin M."/>
            <person name="Sulston J.E."/>
            <person name="Durbin R.M."/>
            <person name="Hubbard T."/>
            <person name="Wooster R."/>
            <person name="Dunham I."/>
            <person name="Carter N.P."/>
            <person name="McVean G."/>
            <person name="Ross M.T."/>
            <person name="Harrow J."/>
            <person name="Olson M.V."/>
            <person name="Beck S."/>
            <person name="Rogers J."/>
            <person name="Bentley D.R."/>
        </authorList>
    </citation>
    <scope>NUCLEOTIDE SEQUENCE [LARGE SCALE GENOMIC DNA]</scope>
</reference>
<reference key="8">
    <citation type="submission" date="2005-07" db="EMBL/GenBank/DDBJ databases">
        <authorList>
            <person name="Mural R.J."/>
            <person name="Istrail S."/>
            <person name="Sutton G.G."/>
            <person name="Florea L."/>
            <person name="Halpern A.L."/>
            <person name="Mobarry C.M."/>
            <person name="Lippert R."/>
            <person name="Walenz B."/>
            <person name="Shatkay H."/>
            <person name="Dew I."/>
            <person name="Miller J.R."/>
            <person name="Flanigan M.J."/>
            <person name="Edwards N.J."/>
            <person name="Bolanos R."/>
            <person name="Fasulo D."/>
            <person name="Halldorsson B.V."/>
            <person name="Hannenhalli S."/>
            <person name="Turner R."/>
            <person name="Yooseph S."/>
            <person name="Lu F."/>
            <person name="Nusskern D.R."/>
            <person name="Shue B.C."/>
            <person name="Zheng X.H."/>
            <person name="Zhong F."/>
            <person name="Delcher A.L."/>
            <person name="Huson D.H."/>
            <person name="Kravitz S.A."/>
            <person name="Mouchard L."/>
            <person name="Reinert K."/>
            <person name="Remington K.A."/>
            <person name="Clark A.G."/>
            <person name="Waterman M.S."/>
            <person name="Eichler E.E."/>
            <person name="Adams M.D."/>
            <person name="Hunkapiller M.W."/>
            <person name="Myers E.W."/>
            <person name="Venter J.C."/>
        </authorList>
    </citation>
    <scope>NUCLEOTIDE SEQUENCE [LARGE SCALE GENOMIC DNA]</scope>
</reference>
<reference key="9">
    <citation type="journal article" date="2004" name="Genome Res.">
        <title>The status, quality, and expansion of the NIH full-length cDNA project: the Mammalian Gene Collection (MGC).</title>
        <authorList>
            <consortium name="The MGC Project Team"/>
        </authorList>
    </citation>
    <scope>NUCLEOTIDE SEQUENCE [LARGE SCALE MRNA] (ISOFORM 1)</scope>
</reference>
<reference key="10">
    <citation type="journal article" date="2003" name="FASEB J.">
        <title>Compartmentalization of bicarbonate-sensitive adenylyl cyclase in distinct signaling microdomains.</title>
        <authorList>
            <person name="Zippin J.H."/>
            <person name="Chen Y."/>
            <person name="Nahirney P."/>
            <person name="Kamenetsky M."/>
            <person name="Wuttke M.S."/>
            <person name="Fischman D.A."/>
            <person name="Levin L.R."/>
            <person name="Buck J."/>
        </authorList>
    </citation>
    <scope>SUBCELLULAR LOCATION</scope>
</reference>
<reference key="11">
    <citation type="journal article" date="2005" name="Am. J. Physiol.">
        <title>Cloning and characterization of the human soluble adenylyl cyclase.</title>
        <authorList>
            <person name="Geng W."/>
            <person name="Wang Z."/>
            <person name="Zhang J."/>
            <person name="Reed B.Y."/>
            <person name="Pak C.Y.C."/>
            <person name="Moe O.W."/>
        </authorList>
    </citation>
    <scope>CATALYTIC ACTIVITY</scope>
    <scope>COFACTOR</scope>
    <scope>TISSUE SPECIFICITY</scope>
    <scope>ACTIVITY REGULATION</scope>
    <scope>SUBCELLULAR LOCATION</scope>
    <scope>FUNCTION</scope>
</reference>
<reference key="12">
    <citation type="journal article" date="2007" name="J. Gen. Physiol.">
        <title>Soluble adenylyl cyclase is localized to cilia and contributes to ciliary beat frequency regulation via production of cAMP.</title>
        <authorList>
            <person name="Schmid A."/>
            <person name="Sutto Z."/>
            <person name="Nlend M.-C."/>
            <person name="Horvath G."/>
            <person name="Schmid N."/>
            <person name="Buck J."/>
            <person name="Levin L.R."/>
            <person name="Conner G.E."/>
            <person name="Fregien N."/>
            <person name="Salathe M."/>
        </authorList>
    </citation>
    <scope>FUNCTION</scope>
    <scope>SUBCELLULAR LOCATION</scope>
    <scope>TISSUE SPECIFICITY</scope>
</reference>
<reference evidence="25 26 27" key="13">
    <citation type="journal article" date="2014" name="ChemMedChem">
        <title>Crystal structure of human soluble adenylate cyclase reveals a distinct, highly flexible allosteric bicarbonate binding pocket.</title>
        <authorList>
            <person name="Saalau-Bethell S.M."/>
            <person name="Berdini V."/>
            <person name="Cleasby A."/>
            <person name="Congreve M."/>
            <person name="Coyle J.E."/>
            <person name="Lock V."/>
            <person name="Murray C.W."/>
            <person name="O'Brien M.A."/>
            <person name="Rich S.J."/>
            <person name="Sambrook T."/>
            <person name="Vinkovic M."/>
            <person name="Yon J.R."/>
            <person name="Jhoti H."/>
        </authorList>
    </citation>
    <scope>X-RAY CRYSTALLOGRAPHY (1.70 ANGSTROMS) OF 1-469 IN COMPLEX WITH HYDROGENCARBONATE; CALCIUM AND ATP ANALOG</scope>
    <scope>CATALYTIC ACTIVITY</scope>
    <scope>FUNCTION</scope>
    <scope>COFACTOR</scope>
    <scope>DOMAIN</scope>
</reference>
<reference evidence="29 30 31" key="14">
    <citation type="journal article" date="2014" name="FEBS J.">
        <title>Structural analysis of human soluble adenylyl cyclase and crystal structures of its nucleotide complexes-implications for cyclase catalysis and evolution.</title>
        <authorList>
            <person name="Kleinboelting S."/>
            <person name="van den Heuvel J."/>
            <person name="Steegborn C."/>
        </authorList>
    </citation>
    <scope>X-RAY CRYSTALLOGRAPHY (1.90 ANGSTROMS) OF 1-469 IN COMPLEXES WITH MAGNESIUM; CALCIUM; ATP AND ATP ANALOGS</scope>
    <scope>FUNCTION</scope>
    <scope>COFACTOR</scope>
    <scope>CATALYTIC ACTIVITY</scope>
    <scope>ACTIVITY REGULATION</scope>
    <scope>DOMAIN</scope>
</reference>
<reference evidence="22 23 24" key="15">
    <citation type="journal article" date="2014" name="Proc. Natl. Acad. Sci. U.S.A.">
        <title>Crystal structures of human soluble adenylyl cyclase reveal mechanisms of catalysis and of its activation through bicarbonate.</title>
        <authorList>
            <person name="Kleinboelting S."/>
            <person name="Diaz A."/>
            <person name="Moniot S."/>
            <person name="van den Heuvel J."/>
            <person name="Weyand M."/>
            <person name="Levin L.R."/>
            <person name="Buck J."/>
            <person name="Steegborn C."/>
        </authorList>
    </citation>
    <scope>X-RAY CRYSTALLOGRAPHY (1.70 ANGSTROMS) OF 1-469 IN COMPLEX WITH CALCIUM; HYDROGENCARBONATE AND ATP ANALOGS</scope>
    <scope>CATALYTIC ACTIVITY</scope>
    <scope>COFACTOR</scope>
    <scope>FUNCTION</scope>
    <scope>ACTIVITY REGULATION</scope>
    <scope>MUTAGENESIS OF LYS-95 AND ARG-176</scope>
    <scope>DOMAIN</scope>
</reference>